<organism>
    <name type="scientific">Mus musculus</name>
    <name type="common">Mouse</name>
    <dbReference type="NCBI Taxonomy" id="10090"/>
    <lineage>
        <taxon>Eukaryota</taxon>
        <taxon>Metazoa</taxon>
        <taxon>Chordata</taxon>
        <taxon>Craniata</taxon>
        <taxon>Vertebrata</taxon>
        <taxon>Euteleostomi</taxon>
        <taxon>Mammalia</taxon>
        <taxon>Eutheria</taxon>
        <taxon>Euarchontoglires</taxon>
        <taxon>Glires</taxon>
        <taxon>Rodentia</taxon>
        <taxon>Myomorpha</taxon>
        <taxon>Muroidea</taxon>
        <taxon>Muridae</taxon>
        <taxon>Murinae</taxon>
        <taxon>Mus</taxon>
        <taxon>Mus</taxon>
    </lineage>
</organism>
<feature type="initiator methionine" description="Removed" evidence="1">
    <location>
        <position position="1"/>
    </location>
</feature>
<feature type="chain" id="PRO_0000247158" description="DnaJ homolog subfamily C member 11">
    <location>
        <begin position="2"/>
        <end position="559"/>
    </location>
</feature>
<feature type="domain" description="J" evidence="3">
    <location>
        <begin position="14"/>
        <end position="82"/>
    </location>
</feature>
<feature type="coiled-coil region" evidence="2">
    <location>
        <begin position="415"/>
        <end position="457"/>
    </location>
</feature>
<feature type="modified residue" description="N-acetylalanine" evidence="1">
    <location>
        <position position="2"/>
    </location>
</feature>
<feature type="modified residue" description="Phosphoserine" evidence="7">
    <location>
        <position position="204"/>
    </location>
</feature>
<feature type="sequence conflict" description="In Ref. 1; BAC41027/BAE42661/BAE43060 and 3; AAH85257." evidence="5" ref="1 3">
    <original>V</original>
    <variation>I</variation>
    <location>
        <position position="195"/>
    </location>
</feature>
<feature type="sequence conflict" description="In Ref. 1; BAC41027." evidence="5" ref="1">
    <original>T</original>
    <variation>S</variation>
    <location>
        <position position="256"/>
    </location>
</feature>
<comment type="function">
    <text evidence="4 5">Required for mitochondrial inner membrane organization. Seems to function through its association with the MICOS complex and the mitochondrial outer membrane sorting assembly machinery (SAM) complex.</text>
</comment>
<comment type="subunit">
    <text evidence="1 5 6">Associates with the mitochondrial contact site and cristae organizing system (MICOS) complex, composed of at least MICOS10/MIC10, CHCHD3/MIC19, CHCHD6/MIC25, APOOL/MIC27, IMMT/MIC60, APOO/MIC23/MIC26 and QIL1/MIC13. This complex was also known under the names MINOS or MitOS complex. The MICOS complex associates with mitochondrial outer membrane proteins SAMM50, MTX1 and MTX2 (together described as components of the mitochondrial outer membrane sorting assembly machinery (SAM) complex) and DNAJC11, mitochondrial inner membrane protein TMEM11 and with HSPA9. The MICOS and SAM complexes together with DNAJC11 are part of a large protein complex spanning both membranes termed the mitochondrial intermembrane space bridging (MIB) complex.</text>
</comment>
<comment type="subcellular location">
    <subcellularLocation>
        <location evidence="1 4">Mitochondrion</location>
    </subcellularLocation>
    <subcellularLocation>
        <location evidence="1">Mitochondrion outer membrane</location>
        <topology evidence="1">Peripheral membrane protein</topology>
    </subcellularLocation>
</comment>
<comment type="miscellaneous">
    <text evidence="4">Following chemical mutagenesis predicted to give rise to a transcript subject to non-sense mediated deccay, mice exhibit an autosomal recessive neuromuscular disease and abnormal mitochondrial cristae morphology.</text>
</comment>
<comment type="similarity">
    <text evidence="5">Belongs to the DNAJC11 family.</text>
</comment>
<comment type="sequence caution" evidence="5">
    <conflict type="miscellaneous discrepancy">
        <sequence resource="EMBL-CDS" id="BAC41027"/>
    </conflict>
    <text>Probable cloning artifact.</text>
</comment>
<name>DJC11_MOUSE</name>
<gene>
    <name type="primary">Dnajc11</name>
</gene>
<reference key="1">
    <citation type="journal article" date="2005" name="Science">
        <title>The transcriptional landscape of the mammalian genome.</title>
        <authorList>
            <person name="Carninci P."/>
            <person name="Kasukawa T."/>
            <person name="Katayama S."/>
            <person name="Gough J."/>
            <person name="Frith M.C."/>
            <person name="Maeda N."/>
            <person name="Oyama R."/>
            <person name="Ravasi T."/>
            <person name="Lenhard B."/>
            <person name="Wells C."/>
            <person name="Kodzius R."/>
            <person name="Shimokawa K."/>
            <person name="Bajic V.B."/>
            <person name="Brenner S.E."/>
            <person name="Batalov S."/>
            <person name="Forrest A.R."/>
            <person name="Zavolan M."/>
            <person name="Davis M.J."/>
            <person name="Wilming L.G."/>
            <person name="Aidinis V."/>
            <person name="Allen J.E."/>
            <person name="Ambesi-Impiombato A."/>
            <person name="Apweiler R."/>
            <person name="Aturaliya R.N."/>
            <person name="Bailey T.L."/>
            <person name="Bansal M."/>
            <person name="Baxter L."/>
            <person name="Beisel K.W."/>
            <person name="Bersano T."/>
            <person name="Bono H."/>
            <person name="Chalk A.M."/>
            <person name="Chiu K.P."/>
            <person name="Choudhary V."/>
            <person name="Christoffels A."/>
            <person name="Clutterbuck D.R."/>
            <person name="Crowe M.L."/>
            <person name="Dalla E."/>
            <person name="Dalrymple B.P."/>
            <person name="de Bono B."/>
            <person name="Della Gatta G."/>
            <person name="di Bernardo D."/>
            <person name="Down T."/>
            <person name="Engstrom P."/>
            <person name="Fagiolini M."/>
            <person name="Faulkner G."/>
            <person name="Fletcher C.F."/>
            <person name="Fukushima T."/>
            <person name="Furuno M."/>
            <person name="Futaki S."/>
            <person name="Gariboldi M."/>
            <person name="Georgii-Hemming P."/>
            <person name="Gingeras T.R."/>
            <person name="Gojobori T."/>
            <person name="Green R.E."/>
            <person name="Gustincich S."/>
            <person name="Harbers M."/>
            <person name="Hayashi Y."/>
            <person name="Hensch T.K."/>
            <person name="Hirokawa N."/>
            <person name="Hill D."/>
            <person name="Huminiecki L."/>
            <person name="Iacono M."/>
            <person name="Ikeo K."/>
            <person name="Iwama A."/>
            <person name="Ishikawa T."/>
            <person name="Jakt M."/>
            <person name="Kanapin A."/>
            <person name="Katoh M."/>
            <person name="Kawasawa Y."/>
            <person name="Kelso J."/>
            <person name="Kitamura H."/>
            <person name="Kitano H."/>
            <person name="Kollias G."/>
            <person name="Krishnan S.P."/>
            <person name="Kruger A."/>
            <person name="Kummerfeld S.K."/>
            <person name="Kurochkin I.V."/>
            <person name="Lareau L.F."/>
            <person name="Lazarevic D."/>
            <person name="Lipovich L."/>
            <person name="Liu J."/>
            <person name="Liuni S."/>
            <person name="McWilliam S."/>
            <person name="Madan Babu M."/>
            <person name="Madera M."/>
            <person name="Marchionni L."/>
            <person name="Matsuda H."/>
            <person name="Matsuzawa S."/>
            <person name="Miki H."/>
            <person name="Mignone F."/>
            <person name="Miyake S."/>
            <person name="Morris K."/>
            <person name="Mottagui-Tabar S."/>
            <person name="Mulder N."/>
            <person name="Nakano N."/>
            <person name="Nakauchi H."/>
            <person name="Ng P."/>
            <person name="Nilsson R."/>
            <person name="Nishiguchi S."/>
            <person name="Nishikawa S."/>
            <person name="Nori F."/>
            <person name="Ohara O."/>
            <person name="Okazaki Y."/>
            <person name="Orlando V."/>
            <person name="Pang K.C."/>
            <person name="Pavan W.J."/>
            <person name="Pavesi G."/>
            <person name="Pesole G."/>
            <person name="Petrovsky N."/>
            <person name="Piazza S."/>
            <person name="Reed J."/>
            <person name="Reid J.F."/>
            <person name="Ring B.Z."/>
            <person name="Ringwald M."/>
            <person name="Rost B."/>
            <person name="Ruan Y."/>
            <person name="Salzberg S.L."/>
            <person name="Sandelin A."/>
            <person name="Schneider C."/>
            <person name="Schoenbach C."/>
            <person name="Sekiguchi K."/>
            <person name="Semple C.A."/>
            <person name="Seno S."/>
            <person name="Sessa L."/>
            <person name="Sheng Y."/>
            <person name="Shibata Y."/>
            <person name="Shimada H."/>
            <person name="Shimada K."/>
            <person name="Silva D."/>
            <person name="Sinclair B."/>
            <person name="Sperling S."/>
            <person name="Stupka E."/>
            <person name="Sugiura K."/>
            <person name="Sultana R."/>
            <person name="Takenaka Y."/>
            <person name="Taki K."/>
            <person name="Tammoja K."/>
            <person name="Tan S.L."/>
            <person name="Tang S."/>
            <person name="Taylor M.S."/>
            <person name="Tegner J."/>
            <person name="Teichmann S.A."/>
            <person name="Ueda H.R."/>
            <person name="van Nimwegen E."/>
            <person name="Verardo R."/>
            <person name="Wei C.L."/>
            <person name="Yagi K."/>
            <person name="Yamanishi H."/>
            <person name="Zabarovsky E."/>
            <person name="Zhu S."/>
            <person name="Zimmer A."/>
            <person name="Hide W."/>
            <person name="Bult C."/>
            <person name="Grimmond S.M."/>
            <person name="Teasdale R.D."/>
            <person name="Liu E.T."/>
            <person name="Brusic V."/>
            <person name="Quackenbush J."/>
            <person name="Wahlestedt C."/>
            <person name="Mattick J.S."/>
            <person name="Hume D.A."/>
            <person name="Kai C."/>
            <person name="Sasaki D."/>
            <person name="Tomaru Y."/>
            <person name="Fukuda S."/>
            <person name="Kanamori-Katayama M."/>
            <person name="Suzuki M."/>
            <person name="Aoki J."/>
            <person name="Arakawa T."/>
            <person name="Iida J."/>
            <person name="Imamura K."/>
            <person name="Itoh M."/>
            <person name="Kato T."/>
            <person name="Kawaji H."/>
            <person name="Kawagashira N."/>
            <person name="Kawashima T."/>
            <person name="Kojima M."/>
            <person name="Kondo S."/>
            <person name="Konno H."/>
            <person name="Nakano K."/>
            <person name="Ninomiya N."/>
            <person name="Nishio T."/>
            <person name="Okada M."/>
            <person name="Plessy C."/>
            <person name="Shibata K."/>
            <person name="Shiraki T."/>
            <person name="Suzuki S."/>
            <person name="Tagami M."/>
            <person name="Waki K."/>
            <person name="Watahiki A."/>
            <person name="Okamura-Oho Y."/>
            <person name="Suzuki H."/>
            <person name="Kawai J."/>
            <person name="Hayashizaki Y."/>
        </authorList>
    </citation>
    <scope>NUCLEOTIDE SEQUENCE [LARGE SCALE MRNA]</scope>
    <source>
        <strain>C57BL/6J</strain>
        <strain>NOD</strain>
        <tissue>Embryo</tissue>
        <tissue>Lung</tissue>
        <tissue>Spleen</tissue>
    </source>
</reference>
<reference key="2">
    <citation type="journal article" date="2009" name="PLoS Biol.">
        <title>Lineage-specific biology revealed by a finished genome assembly of the mouse.</title>
        <authorList>
            <person name="Church D.M."/>
            <person name="Goodstadt L."/>
            <person name="Hillier L.W."/>
            <person name="Zody M.C."/>
            <person name="Goldstein S."/>
            <person name="She X."/>
            <person name="Bult C.J."/>
            <person name="Agarwala R."/>
            <person name="Cherry J.L."/>
            <person name="DiCuccio M."/>
            <person name="Hlavina W."/>
            <person name="Kapustin Y."/>
            <person name="Meric P."/>
            <person name="Maglott D."/>
            <person name="Birtle Z."/>
            <person name="Marques A.C."/>
            <person name="Graves T."/>
            <person name="Zhou S."/>
            <person name="Teague B."/>
            <person name="Potamousis K."/>
            <person name="Churas C."/>
            <person name="Place M."/>
            <person name="Herschleb J."/>
            <person name="Runnheim R."/>
            <person name="Forrest D."/>
            <person name="Amos-Landgraf J."/>
            <person name="Schwartz D.C."/>
            <person name="Cheng Z."/>
            <person name="Lindblad-Toh K."/>
            <person name="Eichler E.E."/>
            <person name="Ponting C.P."/>
        </authorList>
    </citation>
    <scope>NUCLEOTIDE SEQUENCE [LARGE SCALE GENOMIC DNA]</scope>
    <source>
        <strain>C57BL/6J</strain>
    </source>
</reference>
<reference key="3">
    <citation type="journal article" date="2004" name="Genome Res.">
        <title>The status, quality, and expansion of the NIH full-length cDNA project: the Mammalian Gene Collection (MGC).</title>
        <authorList>
            <consortium name="The MGC Project Team"/>
        </authorList>
    </citation>
    <scope>NUCLEOTIDE SEQUENCE [LARGE SCALE MRNA]</scope>
    <source>
        <strain>FVB/N</strain>
        <tissue>Mammary tumor</tissue>
    </source>
</reference>
<reference key="4">
    <citation type="journal article" date="2010" name="Cell">
        <title>A tissue-specific atlas of mouse protein phosphorylation and expression.</title>
        <authorList>
            <person name="Huttlin E.L."/>
            <person name="Jedrychowski M.P."/>
            <person name="Elias J.E."/>
            <person name="Goswami T."/>
            <person name="Rad R."/>
            <person name="Beausoleil S.A."/>
            <person name="Villen J."/>
            <person name="Haas W."/>
            <person name="Sowa M.E."/>
            <person name="Gygi S.P."/>
        </authorList>
    </citation>
    <scope>PHOSPHORYLATION [LARGE SCALE ANALYSIS] AT SER-204</scope>
    <scope>IDENTIFICATION BY MASS SPECTROMETRY [LARGE SCALE ANALYSIS]</scope>
    <source>
        <tissue>Brown adipose tissue</tissue>
        <tissue>Heart</tissue>
        <tissue>Kidney</tissue>
        <tissue>Liver</tissue>
        <tissue>Lung</tissue>
        <tissue>Pancreas</tissue>
        <tissue>Spleen</tissue>
        <tissue>Testis</tissue>
    </source>
</reference>
<reference key="5">
    <citation type="journal article" date="2014" name="PLoS ONE">
        <title>A splicing mutation in the novel mitochondrial protein DNAJC11 causes motor neuron pathology associated with cristae disorganization, and lymphoid abnormalities in mice.</title>
        <authorList>
            <person name="Ioakeimidis F."/>
            <person name="Ott C."/>
            <person name="Kozjak-Pavlovic V."/>
            <person name="Violitzi F."/>
            <person name="Rinotas V."/>
            <person name="Makrinou E."/>
            <person name="Eliopoulos E."/>
            <person name="Fasseas C."/>
            <person name="Kollias G."/>
            <person name="Douni E."/>
        </authorList>
    </citation>
    <scope>FUNCTION</scope>
    <scope>SUBCELLULAR LOCATION</scope>
    <scope>SUBUNIT</scope>
</reference>
<proteinExistence type="evidence at protein level"/>
<evidence type="ECO:0000250" key="1">
    <source>
        <dbReference type="UniProtKB" id="Q9NVH1"/>
    </source>
</evidence>
<evidence type="ECO:0000255" key="2"/>
<evidence type="ECO:0000255" key="3">
    <source>
        <dbReference type="PROSITE-ProRule" id="PRU00286"/>
    </source>
</evidence>
<evidence type="ECO:0000269" key="4">
    <source>
    </source>
</evidence>
<evidence type="ECO:0000305" key="5"/>
<evidence type="ECO:0000305" key="6">
    <source>
    </source>
</evidence>
<evidence type="ECO:0007744" key="7">
    <source>
    </source>
</evidence>
<accession>Q5U458</accession>
<accession>A2A8C9</accession>
<accession>Q8BP83</accession>
<accession>Q8C1Z4</accession>
<accession>Q8C6U5</accession>
<dbReference type="EMBL" id="AK053156">
    <property type="protein sequence ID" value="BAC35287.1"/>
    <property type="molecule type" value="mRNA"/>
</dbReference>
<dbReference type="EMBL" id="AK077544">
    <property type="protein sequence ID" value="BAC36856.1"/>
    <property type="molecule type" value="mRNA"/>
</dbReference>
<dbReference type="EMBL" id="AK089983">
    <property type="protein sequence ID" value="BAC41027.1"/>
    <property type="status" value="ALT_SEQ"/>
    <property type="molecule type" value="mRNA"/>
</dbReference>
<dbReference type="EMBL" id="AK171781">
    <property type="protein sequence ID" value="BAE42661.1"/>
    <property type="molecule type" value="mRNA"/>
</dbReference>
<dbReference type="EMBL" id="AK172542">
    <property type="protein sequence ID" value="BAE43060.1"/>
    <property type="molecule type" value="mRNA"/>
</dbReference>
<dbReference type="EMBL" id="AL611931">
    <property type="status" value="NOT_ANNOTATED_CDS"/>
    <property type="molecule type" value="Genomic_DNA"/>
</dbReference>
<dbReference type="EMBL" id="BC085257">
    <property type="protein sequence ID" value="AAH85257.1"/>
    <property type="molecule type" value="mRNA"/>
</dbReference>
<dbReference type="CCDS" id="CCDS18981.2"/>
<dbReference type="RefSeq" id="NP_766292.2">
    <property type="nucleotide sequence ID" value="NM_172704.3"/>
</dbReference>
<dbReference type="SMR" id="Q5U458"/>
<dbReference type="BioGRID" id="231057">
    <property type="interactions" value="7"/>
</dbReference>
<dbReference type="FunCoup" id="Q5U458">
    <property type="interactions" value="4073"/>
</dbReference>
<dbReference type="IntAct" id="Q5U458">
    <property type="interactions" value="134"/>
</dbReference>
<dbReference type="MINT" id="Q5U458"/>
<dbReference type="STRING" id="10090.ENSMUSP00000051643"/>
<dbReference type="GlyGen" id="Q5U458">
    <property type="glycosylation" value="1 site, 1 O-linked glycan (1 site)"/>
</dbReference>
<dbReference type="iPTMnet" id="Q5U458"/>
<dbReference type="PhosphoSitePlus" id="Q5U458"/>
<dbReference type="SwissPalm" id="Q5U458"/>
<dbReference type="jPOST" id="Q5U458"/>
<dbReference type="PaxDb" id="10090-ENSMUSP00000051643"/>
<dbReference type="PeptideAtlas" id="Q5U458"/>
<dbReference type="ProteomicsDB" id="279418"/>
<dbReference type="Pumba" id="Q5U458"/>
<dbReference type="Antibodypedia" id="27462">
    <property type="antibodies" value="110 antibodies from 24 providers"/>
</dbReference>
<dbReference type="DNASU" id="230935"/>
<dbReference type="Ensembl" id="ENSMUST00000062904.11">
    <property type="protein sequence ID" value="ENSMUSP00000051643.5"/>
    <property type="gene ID" value="ENSMUSG00000039768.17"/>
</dbReference>
<dbReference type="GeneID" id="230935"/>
<dbReference type="KEGG" id="mmu:230935"/>
<dbReference type="UCSC" id="uc008vys.2">
    <property type="organism name" value="mouse"/>
</dbReference>
<dbReference type="AGR" id="MGI:2443386"/>
<dbReference type="CTD" id="55735"/>
<dbReference type="MGI" id="MGI:2443386">
    <property type="gene designation" value="Dnajc11"/>
</dbReference>
<dbReference type="VEuPathDB" id="HostDB:ENSMUSG00000039768"/>
<dbReference type="eggNOG" id="KOG0718">
    <property type="taxonomic scope" value="Eukaryota"/>
</dbReference>
<dbReference type="GeneTree" id="ENSGT00860000133842"/>
<dbReference type="HOGENOM" id="CLU_019611_2_0_1"/>
<dbReference type="InParanoid" id="Q5U458"/>
<dbReference type="OMA" id="QLDKHTM"/>
<dbReference type="OrthoDB" id="18010at2759"/>
<dbReference type="PhylomeDB" id="Q5U458"/>
<dbReference type="TreeFam" id="TF105170"/>
<dbReference type="BioGRID-ORCS" id="230935">
    <property type="hits" value="16 hits in 79 CRISPR screens"/>
</dbReference>
<dbReference type="CD-CODE" id="CE726F99">
    <property type="entry name" value="Postsynaptic density"/>
</dbReference>
<dbReference type="PRO" id="PR:Q5U458"/>
<dbReference type="Proteomes" id="UP000000589">
    <property type="component" value="Chromosome 4"/>
</dbReference>
<dbReference type="RNAct" id="Q5U458">
    <property type="molecule type" value="protein"/>
</dbReference>
<dbReference type="Bgee" id="ENSMUSG00000039768">
    <property type="expression patterns" value="Expressed in primary oocyte and 242 other cell types or tissues"/>
</dbReference>
<dbReference type="ExpressionAtlas" id="Q5U458">
    <property type="expression patterns" value="baseline and differential"/>
</dbReference>
<dbReference type="GO" id="GO:0061617">
    <property type="term" value="C:MICOS complex"/>
    <property type="evidence" value="ECO:0007669"/>
    <property type="project" value="Ensembl"/>
</dbReference>
<dbReference type="GO" id="GO:0005743">
    <property type="term" value="C:mitochondrial inner membrane"/>
    <property type="evidence" value="ECO:0007005"/>
    <property type="project" value="MGI"/>
</dbReference>
<dbReference type="GO" id="GO:0005739">
    <property type="term" value="C:mitochondrion"/>
    <property type="evidence" value="ECO:0007005"/>
    <property type="project" value="MGI"/>
</dbReference>
<dbReference type="GO" id="GO:0016607">
    <property type="term" value="C:nuclear speck"/>
    <property type="evidence" value="ECO:0007669"/>
    <property type="project" value="Ensembl"/>
</dbReference>
<dbReference type="GO" id="GO:0001401">
    <property type="term" value="C:SAM complex"/>
    <property type="evidence" value="ECO:0007669"/>
    <property type="project" value="Ensembl"/>
</dbReference>
<dbReference type="GO" id="GO:0042407">
    <property type="term" value="P:cristae formation"/>
    <property type="evidence" value="ECO:0000315"/>
    <property type="project" value="UniProtKB"/>
</dbReference>
<dbReference type="CDD" id="cd06257">
    <property type="entry name" value="DnaJ"/>
    <property type="match status" value="1"/>
</dbReference>
<dbReference type="FunFam" id="1.10.287.110:FF:000027">
    <property type="entry name" value="DnaJ (Hsp40) homolog, subfamily C, member 11"/>
    <property type="match status" value="1"/>
</dbReference>
<dbReference type="Gene3D" id="1.10.287.110">
    <property type="entry name" value="DnaJ domain"/>
    <property type="match status" value="1"/>
</dbReference>
<dbReference type="InterPro" id="IPR024586">
    <property type="entry name" value="DnaJ-like_C11_C"/>
</dbReference>
<dbReference type="InterPro" id="IPR001623">
    <property type="entry name" value="DnaJ_domain"/>
</dbReference>
<dbReference type="InterPro" id="IPR018253">
    <property type="entry name" value="DnaJ_domain_CS"/>
</dbReference>
<dbReference type="InterPro" id="IPR055225">
    <property type="entry name" value="DNAJC11-like_beta-barrel"/>
</dbReference>
<dbReference type="InterPro" id="IPR036869">
    <property type="entry name" value="J_dom_sf"/>
</dbReference>
<dbReference type="InterPro" id="IPR052243">
    <property type="entry name" value="Mito_inner_membrane_organizer"/>
</dbReference>
<dbReference type="PANTHER" id="PTHR44157">
    <property type="entry name" value="DNAJ HOMOLOG SUBFAMILY C MEMBER 11"/>
    <property type="match status" value="1"/>
</dbReference>
<dbReference type="PANTHER" id="PTHR44157:SF1">
    <property type="entry name" value="DNAJ HOMOLOG SUBFAMILY C MEMBER 11"/>
    <property type="match status" value="1"/>
</dbReference>
<dbReference type="Pfam" id="PF00226">
    <property type="entry name" value="DnaJ"/>
    <property type="match status" value="1"/>
</dbReference>
<dbReference type="Pfam" id="PF11875">
    <property type="entry name" value="DnaJ-like_C11_C"/>
    <property type="match status" value="1"/>
</dbReference>
<dbReference type="Pfam" id="PF22774">
    <property type="entry name" value="DNAJC11_beta-barrel"/>
    <property type="match status" value="1"/>
</dbReference>
<dbReference type="PRINTS" id="PR00625">
    <property type="entry name" value="JDOMAIN"/>
</dbReference>
<dbReference type="SMART" id="SM00271">
    <property type="entry name" value="DnaJ"/>
    <property type="match status" value="1"/>
</dbReference>
<dbReference type="SUPFAM" id="SSF46565">
    <property type="entry name" value="Chaperone J-domain"/>
    <property type="match status" value="1"/>
</dbReference>
<dbReference type="PROSITE" id="PS00636">
    <property type="entry name" value="DNAJ_1"/>
    <property type="match status" value="1"/>
</dbReference>
<dbReference type="PROSITE" id="PS50076">
    <property type="entry name" value="DNAJ_2"/>
    <property type="match status" value="1"/>
</dbReference>
<protein>
    <recommendedName>
        <fullName>DnaJ homolog subfamily C member 11</fullName>
    </recommendedName>
</protein>
<keyword id="KW-0007">Acetylation</keyword>
<keyword id="KW-0143">Chaperone</keyword>
<keyword id="KW-0175">Coiled coil</keyword>
<keyword id="KW-0472">Membrane</keyword>
<keyword id="KW-0496">Mitochondrion</keyword>
<keyword id="KW-1000">Mitochondrion outer membrane</keyword>
<keyword id="KW-0597">Phosphoprotein</keyword>
<keyword id="KW-1185">Reference proteome</keyword>
<sequence length="559" mass="63233">MATALSEEELDNEDYYSLLNVRREASSEELKAAYRRLCMLYHPDKHRDPELKSQAERLFNLVHQAYEVLSDPQTRAIYDIYGKRGLEMEGWEVVERKRTPAEIREEFERLQREREERRLQQRTNPKGTISVGVDATDLFDRYDEEYEDVSGSGFPQIEINKMHISQSIEAPLTATDTAILSGSLSTQNGNGGGSVNFALRRVTSAKGWGELEFGAGDLQGPLFGLKLFRNLTPRCFVTTNCALQFSSRGIRPGLTTVLARNLDKNTVGYLQWRWGIQSAMNTSIVRDTKTCHFTVALQLGIPHSFALISYQHKFQDDDQTRVKGSLKAGFFGTIVEYGAERKISRHSVLGAAVSIGVPQGVSLKVKLNRASQTYFFPIHLTDQLLPSAVFYATVGPLVVYLAVHRLIIRPYLRAQKEKELEKQRENTASDILQKKQEAEAAVRLMQESVRRIIEAEESRMGLIIVNAWYGKFVNDKSRKNEKVKVIDVTVPLQCLVKDSKLILTEASKAGLPGFYDPCVGEEKSLRVLYQFRGVLHQVMVPDSEALRIPKQSHRIDTDG</sequence>